<sequence length="64" mass="7285">IKDGYIVDDVNCTYFCGRNAYCNEECTKLKGESGYCQWASPYGNACYCYKLPDHVRTKGPGRCR</sequence>
<organism>
    <name type="scientific">Leiurus hebraeus</name>
    <name type="common">Hebrew deathstalker scorpion</name>
    <name type="synonym">Leiurus quinquestriatus hebraeus</name>
    <dbReference type="NCBI Taxonomy" id="2899558"/>
    <lineage>
        <taxon>Eukaryota</taxon>
        <taxon>Metazoa</taxon>
        <taxon>Ecdysozoa</taxon>
        <taxon>Arthropoda</taxon>
        <taxon>Chelicerata</taxon>
        <taxon>Arachnida</taxon>
        <taxon>Scorpiones</taxon>
        <taxon>Buthida</taxon>
        <taxon>Buthoidea</taxon>
        <taxon>Buthidae</taxon>
        <taxon>Leiurus</taxon>
    </lineage>
</organism>
<accession>P59355</accession>
<feature type="chain" id="PRO_0000066783" description="Alpha-mammal toxin Lqh2" evidence="3">
    <location>
        <begin position="1"/>
        <end position="64"/>
    </location>
</feature>
<feature type="domain" description="LCN-type CS-alpha/beta" evidence="1">
    <location>
        <begin position="2"/>
        <end position="64"/>
    </location>
</feature>
<feature type="modified residue" description="Arginine amide" evidence="3">
    <location>
        <position position="64"/>
    </location>
</feature>
<feature type="disulfide bond" evidence="1">
    <location>
        <begin position="12"/>
        <end position="63"/>
    </location>
</feature>
<feature type="disulfide bond" evidence="1">
    <location>
        <begin position="16"/>
        <end position="36"/>
    </location>
</feature>
<feature type="disulfide bond" evidence="1">
    <location>
        <begin position="22"/>
        <end position="46"/>
    </location>
</feature>
<feature type="disulfide bond" evidence="1">
    <location>
        <begin position="26"/>
        <end position="48"/>
    </location>
</feature>
<reference key="1">
    <citation type="journal article" date="1998" name="Toxicon">
        <title>New toxins acting on sodium channels from the scorpion Leiurus quinquestriatus hebraeus suggest a clue to mammalian vs insect selectivity.</title>
        <authorList>
            <person name="Sautiere P."/>
            <person name="Cestele S."/>
            <person name="Kopeyan C."/>
            <person name="Martinage A."/>
            <person name="Drobecq H."/>
            <person name="Doljansky Y."/>
            <person name="Gordon D."/>
        </authorList>
    </citation>
    <scope>PROTEIN SEQUENCE</scope>
    <scope>FUNCTION</scope>
    <scope>AMIDATION AT ARG-64</scope>
    <scope>TOXIC DOSE</scope>
    <source>
        <tissue>Venom</tissue>
    </source>
</reference>
<reference key="2">
    <citation type="journal article" date="2000" name="Pflugers Arch.">
        <title>Modulation of cloned skeletal muscle sodium channels by the scorpion toxins Lqh II, Lqh III, and Lqh alphaIT.</title>
        <authorList>
            <person name="Chen H."/>
            <person name="Gordon D."/>
            <person name="Heinemann S.H."/>
        </authorList>
    </citation>
    <scope>FUNCTION</scope>
</reference>
<reference key="3">
    <citation type="journal article" date="2006" name="Toxicon">
        <title>Moving pieces in a taxonomic puzzle: venom 2D-LC/MS and data clustering analyses to infer phylogenetic relationships in some scorpions from the Buthidae family (Scorpiones).</title>
        <authorList>
            <person name="Nascimento D.G."/>
            <person name="Rates B."/>
            <person name="Santos D.M."/>
            <person name="Verano-Braga T."/>
            <person name="Barbosa-Silva A."/>
            <person name="Dutra A.A.A."/>
            <person name="Biondi I."/>
            <person name="Martin-Eauclaire M.-F."/>
            <person name="De Lima M.E."/>
            <person name="Pimenta A.M.C."/>
        </authorList>
    </citation>
    <scope>IDENTIFICATION BY MASS SPECTROMETRY</scope>
</reference>
<name>SCX2_LEIHE</name>
<dbReference type="SMR" id="P59355"/>
<dbReference type="GO" id="GO:0005576">
    <property type="term" value="C:extracellular region"/>
    <property type="evidence" value="ECO:0007669"/>
    <property type="project" value="UniProtKB-SubCell"/>
</dbReference>
<dbReference type="GO" id="GO:0019871">
    <property type="term" value="F:sodium channel inhibitor activity"/>
    <property type="evidence" value="ECO:0007669"/>
    <property type="project" value="InterPro"/>
</dbReference>
<dbReference type="GO" id="GO:0090729">
    <property type="term" value="F:toxin activity"/>
    <property type="evidence" value="ECO:0007669"/>
    <property type="project" value="UniProtKB-KW"/>
</dbReference>
<dbReference type="GO" id="GO:0006952">
    <property type="term" value="P:defense response"/>
    <property type="evidence" value="ECO:0007669"/>
    <property type="project" value="InterPro"/>
</dbReference>
<dbReference type="CDD" id="cd23106">
    <property type="entry name" value="neurotoxins_LC_scorpion"/>
    <property type="match status" value="1"/>
</dbReference>
<dbReference type="FunFam" id="3.30.30.10:FF:000002">
    <property type="entry name" value="Alpha-like toxin BmK-M1"/>
    <property type="match status" value="1"/>
</dbReference>
<dbReference type="Gene3D" id="3.30.30.10">
    <property type="entry name" value="Knottin, scorpion toxin-like"/>
    <property type="match status" value="1"/>
</dbReference>
<dbReference type="InterPro" id="IPR044062">
    <property type="entry name" value="LCN-type_CS_alpha_beta_dom"/>
</dbReference>
<dbReference type="InterPro" id="IPR003614">
    <property type="entry name" value="Scorpion_toxin-like"/>
</dbReference>
<dbReference type="InterPro" id="IPR036574">
    <property type="entry name" value="Scorpion_toxin-like_sf"/>
</dbReference>
<dbReference type="InterPro" id="IPR018218">
    <property type="entry name" value="Scorpion_toxinL"/>
</dbReference>
<dbReference type="InterPro" id="IPR002061">
    <property type="entry name" value="Scorpion_toxinL/defensin"/>
</dbReference>
<dbReference type="Pfam" id="PF00537">
    <property type="entry name" value="Toxin_3"/>
    <property type="match status" value="1"/>
</dbReference>
<dbReference type="PRINTS" id="PR00285">
    <property type="entry name" value="SCORPNTOXIN"/>
</dbReference>
<dbReference type="PRINTS" id="PR00284">
    <property type="entry name" value="TOXIN"/>
</dbReference>
<dbReference type="SMART" id="SM00505">
    <property type="entry name" value="Knot1"/>
    <property type="match status" value="1"/>
</dbReference>
<dbReference type="SUPFAM" id="SSF57095">
    <property type="entry name" value="Scorpion toxin-like"/>
    <property type="match status" value="1"/>
</dbReference>
<dbReference type="PROSITE" id="PS51863">
    <property type="entry name" value="LCN_CSAB"/>
    <property type="match status" value="1"/>
</dbReference>
<proteinExistence type="evidence at protein level"/>
<comment type="function">
    <text evidence="2 3">Alpha toxins bind voltage-independently at site-3 of sodium channels (Nav) and inhibit the inactivation of the activated channels, thereby blocking neuronal transmission. The dissociation is voltage-dependent. Is active on mammals and competes for alpha-toxins binding on both mammalian and cockroach sodium channels.</text>
</comment>
<comment type="subcellular location">
    <subcellularLocation>
        <location>Secreted</location>
    </subcellularLocation>
</comment>
<comment type="tissue specificity">
    <text>Expressed by the venom gland.</text>
</comment>
<comment type="domain">
    <text evidence="4">Has the structural arrangement of an alpha-helix connected to antiparallel beta-sheets by disulfide bonds (CS-alpha/beta).</text>
</comment>
<comment type="toxic dose">
    <text evidence="3">LD(50) is 1.9 mg/kg by intracerebroventricular injection into mice.</text>
</comment>
<comment type="similarity">
    <text evidence="4">Belongs to the long (4 C-C) scorpion toxin superfamily. Sodium channel inhibitor family. Alpha subfamily.</text>
</comment>
<keyword id="KW-0027">Amidation</keyword>
<keyword id="KW-0903">Direct protein sequencing</keyword>
<keyword id="KW-1015">Disulfide bond</keyword>
<keyword id="KW-0872">Ion channel impairing toxin</keyword>
<keyword id="KW-0528">Neurotoxin</keyword>
<keyword id="KW-0964">Secreted</keyword>
<keyword id="KW-0800">Toxin</keyword>
<keyword id="KW-0738">Voltage-gated sodium channel impairing toxin</keyword>
<evidence type="ECO:0000255" key="1">
    <source>
        <dbReference type="PROSITE-ProRule" id="PRU01210"/>
    </source>
</evidence>
<evidence type="ECO:0000269" key="2">
    <source>
    </source>
</evidence>
<evidence type="ECO:0000269" key="3">
    <source>
    </source>
</evidence>
<evidence type="ECO:0000305" key="4"/>
<protein>
    <recommendedName>
        <fullName>Alpha-mammal toxin Lqh2</fullName>
    </recommendedName>
    <alternativeName>
        <fullName>Lqh II</fullName>
        <shortName>LqhII</shortName>
    </alternativeName>
</protein>